<gene>
    <name type="primary">Cyth1</name>
    <name type="synonym">Pscd1</name>
</gene>
<feature type="chain" id="PRO_0000120195" description="Cytohesin-1">
    <location>
        <begin position="1"/>
        <end position="398"/>
    </location>
</feature>
<feature type="domain" description="SEC7" evidence="5">
    <location>
        <begin position="73"/>
        <end position="202"/>
    </location>
</feature>
<feature type="domain" description="PH" evidence="4">
    <location>
        <begin position="260"/>
        <end position="377"/>
    </location>
</feature>
<feature type="region of interest" description="Necessary for localization at adherens junction" evidence="7">
    <location>
        <begin position="1"/>
        <end position="60"/>
    </location>
</feature>
<feature type="region of interest" description="C-terminal autoinhibitory region" evidence="1">
    <location>
        <begin position="388"/>
        <end position="396"/>
    </location>
</feature>
<feature type="coiled-coil region" evidence="3">
    <location>
        <begin position="10"/>
        <end position="67"/>
    </location>
</feature>
<feature type="binding site" evidence="1">
    <location>
        <begin position="269"/>
        <end position="277"/>
    </location>
    <ligand>
        <name>a 1,2-diacyl-sn-glycero-3-phospho-(1D-myo-inositol-3,4,5-trisphosphate)</name>
        <dbReference type="ChEBI" id="CHEBI:57836"/>
    </ligand>
</feature>
<feature type="binding site" evidence="1">
    <location>
        <position position="281"/>
    </location>
    <ligand>
        <name>a 1,2-diacyl-sn-glycero-3-phospho-(1D-myo-inositol-3,4,5-trisphosphate)</name>
        <dbReference type="ChEBI" id="CHEBI:57836"/>
    </ligand>
</feature>
<feature type="binding site" evidence="1">
    <location>
        <position position="292"/>
    </location>
    <ligand>
        <name>a 1,2-diacyl-sn-glycero-3-phospho-(1D-myo-inositol-3,4,5-trisphosphate)</name>
        <dbReference type="ChEBI" id="CHEBI:57836"/>
    </ligand>
</feature>
<feature type="binding site" evidence="1">
    <location>
        <position position="302"/>
    </location>
    <ligand>
        <name>a 1,2-diacyl-sn-glycero-3-phospho-(1D-myo-inositol-3,4,5-trisphosphate)</name>
        <dbReference type="ChEBI" id="CHEBI:57836"/>
    </ligand>
</feature>
<feature type="binding site" evidence="1">
    <location>
        <position position="351"/>
    </location>
    <ligand>
        <name>a 1,2-diacyl-sn-glycero-3-phospho-(1D-myo-inositol-3,4,5-trisphosphate)</name>
        <dbReference type="ChEBI" id="CHEBI:57836"/>
    </ligand>
</feature>
<feature type="modified residue" description="N-acetylmethionine" evidence="2">
    <location>
        <position position="1"/>
    </location>
</feature>
<feature type="splice variant" id="VSP_006035" description="In isoform 2." evidence="9">
    <location>
        <position position="273"/>
    </location>
</feature>
<feature type="mutagenesis site" description="Impairs epithelium polarity." evidence="7">
    <original>E</original>
    <variation>K</variation>
    <location>
        <position position="157"/>
    </location>
</feature>
<feature type="mutagenesis site" description="Impairs autoinhibition; when associated with A-389. Impairs translocation to the cell membrane." evidence="6">
    <original>L</original>
    <variation>A</variation>
    <location>
        <position position="385"/>
    </location>
</feature>
<feature type="mutagenesis site" description="Impairs autoinhibition; when associated with A-385. Impairs translocation to the cell membrane." evidence="6">
    <original>K</original>
    <variation>A</variation>
    <location>
        <position position="389"/>
    </location>
</feature>
<feature type="mutagenesis site" description="Increases guanine exchange factor activity." evidence="6">
    <original>S</original>
    <variation>E</variation>
    <location>
        <position position="394"/>
    </location>
</feature>
<feature type="sequence conflict" description="In Ref. 2; AAC71694." evidence="10" ref="2">
    <original>D</original>
    <variation>E</variation>
    <location>
        <position position="3"/>
    </location>
</feature>
<keyword id="KW-0007">Acetylation</keyword>
<keyword id="KW-0025">Alternative splicing</keyword>
<keyword id="KW-0965">Cell junction</keyword>
<keyword id="KW-1003">Cell membrane</keyword>
<keyword id="KW-0175">Coiled coil</keyword>
<keyword id="KW-0963">Cytoplasm</keyword>
<keyword id="KW-0344">Guanine-nucleotide releasing factor</keyword>
<keyword id="KW-0446">Lipid-binding</keyword>
<keyword id="KW-0472">Membrane</keyword>
<keyword id="KW-1185">Reference proteome</keyword>
<keyword id="KW-0796">Tight junction</keyword>
<keyword id="KW-0832">Ubl conjugation</keyword>
<name>CYH1_MOUSE</name>
<evidence type="ECO:0000250" key="1"/>
<evidence type="ECO:0000250" key="2">
    <source>
        <dbReference type="UniProtKB" id="Q15438"/>
    </source>
</evidence>
<evidence type="ECO:0000255" key="3"/>
<evidence type="ECO:0000255" key="4">
    <source>
        <dbReference type="PROSITE-ProRule" id="PRU00145"/>
    </source>
</evidence>
<evidence type="ECO:0000255" key="5">
    <source>
        <dbReference type="PROSITE-ProRule" id="PRU00189"/>
    </source>
</evidence>
<evidence type="ECO:0000269" key="6">
    <source>
    </source>
</evidence>
<evidence type="ECO:0000269" key="7">
    <source>
    </source>
</evidence>
<evidence type="ECO:0000269" key="8">
    <source>
    </source>
</evidence>
<evidence type="ECO:0000303" key="9">
    <source>
    </source>
</evidence>
<evidence type="ECO:0000305" key="10"/>
<accession>Q9QX11</accession>
<accession>O88817</accession>
<accession>Q76MU4</accession>
<comment type="function">
    <text evidence="6 7 8">Promotes guanine-nucleotide exchange on ARF1, ARF5 and ARF6 (PubMed:18042453, PubMed:20080746). Promotes the activation of ARF factors through replacement of GDP with GTP (PubMed:18042453). Plays an important role in membrane trafficking, during junctional remodeling and epithelial polarization, through regulation of ARF6 activity (PubMed:20080746, PubMed:29420262).</text>
</comment>
<comment type="subunit">
    <text evidence="2 7">Interacts with TRIM23 and CYTIP (By similarity). Interacts (via coiled-coil domain) with FRMD4A (via coiled-coil domain) (PubMed:20080746). Interacts with FRMD4B (PubMed:20080746). Found in a complex with PARD3, CYTH1 and FRMD4A (PubMed:20080746). Interacts (via N-terminal domain) with INAVA (via N-terminal domain) (By similarity).</text>
</comment>
<comment type="subcellular location">
    <subcellularLocation>
        <location evidence="6 8">Cell membrane</location>
        <topology evidence="6">Peripheral membrane protein</topology>
    </subcellularLocation>
    <subcellularLocation>
        <location evidence="6 8">Cytoplasm</location>
        <location evidence="6 8">Cytosol</location>
    </subcellularLocation>
    <subcellularLocation>
        <location evidence="7">Cell junction</location>
        <location evidence="7">Tight junction</location>
    </subcellularLocation>
    <subcellularLocation>
        <location evidence="7">Cell junction</location>
        <location evidence="7">Adherens junction</location>
    </subcellularLocation>
    <text evidence="7">Colocalized with TJP1 during epithelial polarization (PubMed:20080746).</text>
</comment>
<comment type="alternative products">
    <event type="alternative splicing"/>
    <isoform>
        <id>Q9QX11-1</id>
        <name>1</name>
        <sequence type="displayed"/>
    </isoform>
    <isoform>
        <id>Q9QX11-2</id>
        <name>2</name>
        <sequence type="described" ref="VSP_006035"/>
    </isoform>
</comment>
<comment type="tissue specificity">
    <text evidence="8">Expressed in colon and small intestine (at protein level).</text>
</comment>
<comment type="domain">
    <text evidence="1">Binds via its PH domain to the inositol head group of phosphatidylinositol 3,4,5-trisphosphate.</text>
</comment>
<comment type="domain">
    <text evidence="6">Autoinhibited by its C-terminal basic region.</text>
</comment>
<comment type="PTM">
    <text evidence="8">Ubiquitinated by SCF(FBXW11) E3 ubiquitin-protein ligase complex. Ubiquitination induces proteasomal degradation.</text>
</comment>
<sequence>MEDDDSYVPSDLTAEERQELENIRRRKQELLADIQRLKEEIAEVANEIESLGSTEERKNMQRNKQVAMGRKKFNMDPKKGIQFLIENGLLKNTCEDIAQFLYKGEGLNKTAIGDYLGERDEFSIQVLHAFVELHEFTDLNLVQALRQFLWSFRLPGEAQKIDRMMEAFAQRYCQCNTGVFQSTDTCYVLSFAIIMLNTSLHNPNVKDKPTVERFIAMNRGINDGGDLPEELLRNLYESIKNEPFKIPEDDGNDLTHTFFNPDREGWLLKLGGGRVKTWKRRWFILTDNCLYYFEYTTDKEPRGIIPLENLSIREVEDSKKPNCFELYIPDNKDQVIKACKTEADGRVVEGNHTVYRISAPTPEEKEDWIKCIKAAISRDPFYEMLAARKKKVSSTKRH</sequence>
<organism>
    <name type="scientific">Mus musculus</name>
    <name type="common">Mouse</name>
    <dbReference type="NCBI Taxonomy" id="10090"/>
    <lineage>
        <taxon>Eukaryota</taxon>
        <taxon>Metazoa</taxon>
        <taxon>Chordata</taxon>
        <taxon>Craniata</taxon>
        <taxon>Vertebrata</taxon>
        <taxon>Euteleostomi</taxon>
        <taxon>Mammalia</taxon>
        <taxon>Eutheria</taxon>
        <taxon>Euarchontoglires</taxon>
        <taxon>Glires</taxon>
        <taxon>Rodentia</taxon>
        <taxon>Myomorpha</taxon>
        <taxon>Muroidea</taxon>
        <taxon>Muridae</taxon>
        <taxon>Murinae</taxon>
        <taxon>Mus</taxon>
        <taxon>Mus</taxon>
    </lineage>
</organism>
<protein>
    <recommendedName>
        <fullName>Cytohesin-1</fullName>
    </recommendedName>
    <alternativeName>
        <fullName>PH, SEC7 and coiled-coil domain-containing protein 1</fullName>
        <shortName>CLM1</shortName>
    </alternativeName>
    <alternativeName>
        <fullName>SEC7 homolog A</fullName>
        <shortName>mSec7-1</shortName>
    </alternativeName>
</protein>
<reference key="1">
    <citation type="journal article" date="1998" name="FEBS Lett.">
        <title>Complex regulation of multiple cytohesin-like genes in murine tissues and cells.</title>
        <authorList>
            <person name="Kim H.-S."/>
            <person name="Chen Y."/>
            <person name="Lonai P."/>
        </authorList>
    </citation>
    <scope>NUCLEOTIDE SEQUENCE [MRNA] (ISOFORM 2)</scope>
    <source>
        <tissue>Brain</tissue>
    </source>
</reference>
<reference key="2">
    <citation type="journal article" date="1998" name="Immunogenetics">
        <title>Cloning and sequencing of cDNA encoding mouse cytohesin-1.</title>
        <authorList>
            <person name="O'Rourke A.M."/>
            <person name="Escuro G."/>
            <person name="Feeney A.J."/>
        </authorList>
    </citation>
    <scope>NUCLEOTIDE SEQUENCE [MRNA] (ISOFORM 1)</scope>
    <source>
        <strain>B10D2/NSNJ</strain>
        <tissue>Lymph node</tissue>
    </source>
</reference>
<reference key="3">
    <citation type="journal article" date="2000" name="Biochim. Biophys. Acta">
        <title>Cloning and characterization of the promoter of murine cytohesin-1 gene.</title>
        <authorList>
            <person name="Goda N."/>
            <person name="Tanoue A."/>
            <person name="Kikuchi S."/>
            <person name="Tsujimoto G."/>
        </authorList>
    </citation>
    <scope>NUCLEOTIDE SEQUENCE [MRNA] (ISOFORM 1)</scope>
</reference>
<reference key="4">
    <citation type="journal article" date="2007" name="Mol. Cell">
        <title>Structural basis and mechanism of autoregulation in 3-phosphoinositide-dependent Grp1 family Arf GTPase exchange factors.</title>
        <authorList>
            <person name="DiNitto J.P."/>
            <person name="Delprato A."/>
            <person name="Gabe Lee M.T."/>
            <person name="Cronin T.C."/>
            <person name="Huang S."/>
            <person name="Guilherme A."/>
            <person name="Czech M.P."/>
            <person name="Lambright D.G."/>
        </authorList>
    </citation>
    <scope>FUNCTION</scope>
    <scope>SUBCELLULAR LOCATION</scope>
    <scope>DOMAIN</scope>
    <scope>AUTOINHIBITION</scope>
    <scope>MUTAGENESIS OF LEU-385; LYS-389 AND SER-394</scope>
</reference>
<reference key="5">
    <citation type="journal article" date="2010" name="Cell">
        <title>A tissue-specific atlas of mouse protein phosphorylation and expression.</title>
        <authorList>
            <person name="Huttlin E.L."/>
            <person name="Jedrychowski M.P."/>
            <person name="Elias J.E."/>
            <person name="Goswami T."/>
            <person name="Rad R."/>
            <person name="Beausoleil S.A."/>
            <person name="Villen J."/>
            <person name="Haas W."/>
            <person name="Sowa M.E."/>
            <person name="Gygi S.P."/>
        </authorList>
    </citation>
    <scope>IDENTIFICATION BY MASS SPECTROMETRY [LARGE SCALE ANALYSIS]</scope>
    <source>
        <tissue>Brain</tissue>
        <tissue>Heart</tissue>
        <tissue>Spleen</tissue>
    </source>
</reference>
<reference key="6">
    <citation type="journal article" date="2010" name="Proc. Natl. Acad. Sci. U.S.A.">
        <title>FRMD4A regulates epithelial polarity by connecting Arf6 activation with the PAR complex.</title>
        <authorList>
            <person name="Ikenouchi J."/>
            <person name="Umeda M."/>
        </authorList>
    </citation>
    <scope>SUBCELLULAR LOCATION</scope>
    <scope>INTERACTION WITH FRMD4A AND FRMD4B</scope>
    <scope>SUBUNIT</scope>
    <scope>FUNCTION</scope>
    <scope>MUTAGENESIS OF GLU-157</scope>
</reference>
<reference key="7">
    <citation type="journal article" date="2018" name="Science">
        <title>C1orf106 is a colitis risk gene that regulates stability of epithelial adherens junctions.</title>
        <authorList>
            <person name="Mohanan V."/>
            <person name="Nakata T."/>
            <person name="Desch A.N."/>
            <person name="Levesque C."/>
            <person name="Boroughs A."/>
            <person name="Guzman G."/>
            <person name="Cao Z."/>
            <person name="Creasey E."/>
            <person name="Yao J."/>
            <person name="Boucher G."/>
            <person name="Charron G."/>
            <person name="Bhan A.K."/>
            <person name="Schenone M."/>
            <person name="Carr S.A."/>
            <person name="Reinecker H.C."/>
            <person name="Daly M.J."/>
            <person name="Rioux J.D."/>
            <person name="Lassen K.G."/>
            <person name="Xavier R.J."/>
        </authorList>
    </citation>
    <scope>FUNCTION</scope>
    <scope>SUBCELLULAR LOCATION</scope>
    <scope>TISSUE SPECIFICITY</scope>
    <scope>UBIQUITINATION</scope>
</reference>
<proteinExistence type="evidence at protein level"/>
<dbReference type="EMBL" id="AB013464">
    <property type="protein sequence ID" value="BAA33428.1"/>
    <property type="molecule type" value="mRNA"/>
</dbReference>
<dbReference type="EMBL" id="AF051337">
    <property type="protein sequence ID" value="AAC71694.1"/>
    <property type="molecule type" value="mRNA"/>
</dbReference>
<dbReference type="EMBL" id="AB035538">
    <property type="protein sequence ID" value="BAB13509.1"/>
    <property type="molecule type" value="mRNA"/>
</dbReference>
<dbReference type="CCDS" id="CCDS48997.1">
    <molecule id="Q9QX11-2"/>
</dbReference>
<dbReference type="RefSeq" id="NP_001106169.1">
    <molecule id="Q9QX11-2"/>
    <property type="nucleotide sequence ID" value="NM_001112699.2"/>
</dbReference>
<dbReference type="RefSeq" id="NP_035310.2">
    <molecule id="Q9QX11-1"/>
    <property type="nucleotide sequence ID" value="NM_011180.3"/>
</dbReference>
<dbReference type="SMR" id="Q9QX11"/>
<dbReference type="BioGRID" id="202411">
    <property type="interactions" value="7"/>
</dbReference>
<dbReference type="FunCoup" id="Q9QX11">
    <property type="interactions" value="1541"/>
</dbReference>
<dbReference type="IntAct" id="Q9QX11">
    <property type="interactions" value="4"/>
</dbReference>
<dbReference type="MINT" id="Q9QX11"/>
<dbReference type="STRING" id="10090.ENSMUSP00000101909"/>
<dbReference type="iPTMnet" id="Q9QX11"/>
<dbReference type="PhosphoSitePlus" id="Q9QX11"/>
<dbReference type="PaxDb" id="10090-ENSMUSP00000017276"/>
<dbReference type="ProteomicsDB" id="283997">
    <molecule id="Q9QX11-1"/>
</dbReference>
<dbReference type="ProteomicsDB" id="283998">
    <molecule id="Q9QX11-2"/>
</dbReference>
<dbReference type="Pumba" id="Q9QX11"/>
<dbReference type="Antibodypedia" id="19745">
    <property type="antibodies" value="256 antibodies from 32 providers"/>
</dbReference>
<dbReference type="DNASU" id="19157"/>
<dbReference type="Ensembl" id="ENSMUST00000017276.14">
    <molecule id="Q9QX11-2"/>
    <property type="protein sequence ID" value="ENSMUSP00000017276.8"/>
    <property type="gene ID" value="ENSMUSG00000017132.19"/>
</dbReference>
<dbReference type="GeneID" id="19157"/>
<dbReference type="KEGG" id="mmu:19157"/>
<dbReference type="UCSC" id="uc011yil.1">
    <molecule id="Q9QX11-1"/>
    <property type="organism name" value="mouse"/>
</dbReference>
<dbReference type="AGR" id="MGI:1334257"/>
<dbReference type="CTD" id="9267"/>
<dbReference type="MGI" id="MGI:1334257">
    <property type="gene designation" value="Cyth1"/>
</dbReference>
<dbReference type="VEuPathDB" id="HostDB:ENSMUSG00000017132"/>
<dbReference type="eggNOG" id="KOG0930">
    <property type="taxonomic scope" value="Eukaryota"/>
</dbReference>
<dbReference type="GeneTree" id="ENSGT00940000157519"/>
<dbReference type="HOGENOM" id="CLU_032820_3_0_1"/>
<dbReference type="InParanoid" id="Q9QX11"/>
<dbReference type="TreeFam" id="TF352091"/>
<dbReference type="Reactome" id="R-MMU-6811438">
    <property type="pathway name" value="Intra-Golgi traffic"/>
</dbReference>
<dbReference type="BioGRID-ORCS" id="19157">
    <property type="hits" value="1 hit in 77 CRISPR screens"/>
</dbReference>
<dbReference type="CD-CODE" id="CE726F99">
    <property type="entry name" value="Postsynaptic density"/>
</dbReference>
<dbReference type="ChiTaRS" id="Cyth1">
    <property type="organism name" value="mouse"/>
</dbReference>
<dbReference type="PRO" id="PR:Q9QX11"/>
<dbReference type="Proteomes" id="UP000000589">
    <property type="component" value="Chromosome 11"/>
</dbReference>
<dbReference type="RNAct" id="Q9QX11">
    <property type="molecule type" value="protein"/>
</dbReference>
<dbReference type="Bgee" id="ENSMUSG00000017132">
    <property type="expression patterns" value="Expressed in vestibular membrane of cochlear duct and 233 other cell types or tissues"/>
</dbReference>
<dbReference type="ExpressionAtlas" id="Q9QX11">
    <property type="expression patterns" value="baseline and differential"/>
</dbReference>
<dbReference type="GO" id="GO:0005912">
    <property type="term" value="C:adherens junction"/>
    <property type="evidence" value="ECO:0007669"/>
    <property type="project" value="UniProtKB-SubCell"/>
</dbReference>
<dbReference type="GO" id="GO:0005923">
    <property type="term" value="C:bicellular tight junction"/>
    <property type="evidence" value="ECO:0000314"/>
    <property type="project" value="MGI"/>
</dbReference>
<dbReference type="GO" id="GO:0009898">
    <property type="term" value="C:cytoplasmic side of plasma membrane"/>
    <property type="evidence" value="ECO:0000314"/>
    <property type="project" value="UniProtKB"/>
</dbReference>
<dbReference type="GO" id="GO:0005829">
    <property type="term" value="C:cytosol"/>
    <property type="evidence" value="ECO:0000314"/>
    <property type="project" value="UniProtKB"/>
</dbReference>
<dbReference type="GO" id="GO:0005886">
    <property type="term" value="C:plasma membrane"/>
    <property type="evidence" value="ECO:0000314"/>
    <property type="project" value="UniProtKB"/>
</dbReference>
<dbReference type="GO" id="GO:0005085">
    <property type="term" value="F:guanyl-nucleotide exchange factor activity"/>
    <property type="evidence" value="ECO:0000314"/>
    <property type="project" value="UniProtKB"/>
</dbReference>
<dbReference type="GO" id="GO:0008289">
    <property type="term" value="F:lipid binding"/>
    <property type="evidence" value="ECO:0007669"/>
    <property type="project" value="UniProtKB-KW"/>
</dbReference>
<dbReference type="GO" id="GO:0090162">
    <property type="term" value="P:establishment of epithelial cell polarity"/>
    <property type="evidence" value="ECO:0000315"/>
    <property type="project" value="MGI"/>
</dbReference>
<dbReference type="GO" id="GO:0032012">
    <property type="term" value="P:regulation of ARF protein signal transduction"/>
    <property type="evidence" value="ECO:0007669"/>
    <property type="project" value="InterPro"/>
</dbReference>
<dbReference type="CDD" id="cd01252">
    <property type="entry name" value="PH_GRP1-like"/>
    <property type="match status" value="1"/>
</dbReference>
<dbReference type="CDD" id="cd00171">
    <property type="entry name" value="Sec7"/>
    <property type="match status" value="1"/>
</dbReference>
<dbReference type="FunFam" id="1.10.1000.11:FF:000002">
    <property type="entry name" value="Cytohesin 1"/>
    <property type="match status" value="1"/>
</dbReference>
<dbReference type="FunFam" id="1.10.220.20:FF:000003">
    <property type="entry name" value="Cytohesin 1"/>
    <property type="match status" value="1"/>
</dbReference>
<dbReference type="FunFam" id="2.30.29.30:FF:000009">
    <property type="entry name" value="Cytohesin 1"/>
    <property type="match status" value="1"/>
</dbReference>
<dbReference type="Gene3D" id="1.10.220.20">
    <property type="match status" value="1"/>
</dbReference>
<dbReference type="Gene3D" id="1.10.1000.11">
    <property type="entry name" value="Arf Nucleotide-binding Site Opener,domain 2"/>
    <property type="match status" value="1"/>
</dbReference>
<dbReference type="Gene3D" id="2.30.29.30">
    <property type="entry name" value="Pleckstrin-homology domain (PH domain)/Phosphotyrosine-binding domain (PTB)"/>
    <property type="match status" value="1"/>
</dbReference>
<dbReference type="InterPro" id="IPR011993">
    <property type="entry name" value="PH-like_dom_sf"/>
</dbReference>
<dbReference type="InterPro" id="IPR001849">
    <property type="entry name" value="PH_domain"/>
</dbReference>
<dbReference type="InterPro" id="IPR023394">
    <property type="entry name" value="Sec7_C_sf"/>
</dbReference>
<dbReference type="InterPro" id="IPR000904">
    <property type="entry name" value="Sec7_dom"/>
</dbReference>
<dbReference type="InterPro" id="IPR035999">
    <property type="entry name" value="Sec7_dom_sf"/>
</dbReference>
<dbReference type="PANTHER" id="PTHR10663:SF340">
    <property type="entry name" value="CYTOHESIN-1"/>
    <property type="match status" value="1"/>
</dbReference>
<dbReference type="PANTHER" id="PTHR10663">
    <property type="entry name" value="GUANYL-NUCLEOTIDE EXCHANGE FACTOR"/>
    <property type="match status" value="1"/>
</dbReference>
<dbReference type="Pfam" id="PF00169">
    <property type="entry name" value="PH"/>
    <property type="match status" value="1"/>
</dbReference>
<dbReference type="Pfam" id="PF01369">
    <property type="entry name" value="Sec7"/>
    <property type="match status" value="1"/>
</dbReference>
<dbReference type="SMART" id="SM00233">
    <property type="entry name" value="PH"/>
    <property type="match status" value="1"/>
</dbReference>
<dbReference type="SMART" id="SM00222">
    <property type="entry name" value="Sec7"/>
    <property type="match status" value="1"/>
</dbReference>
<dbReference type="SUPFAM" id="SSF50729">
    <property type="entry name" value="PH domain-like"/>
    <property type="match status" value="1"/>
</dbReference>
<dbReference type="SUPFAM" id="SSF48425">
    <property type="entry name" value="Sec7 domain"/>
    <property type="match status" value="1"/>
</dbReference>
<dbReference type="PROSITE" id="PS50003">
    <property type="entry name" value="PH_DOMAIN"/>
    <property type="match status" value="1"/>
</dbReference>
<dbReference type="PROSITE" id="PS50190">
    <property type="entry name" value="SEC7"/>
    <property type="match status" value="1"/>
</dbReference>